<reference key="1">
    <citation type="journal article" date="2004" name="Environ. Microbiol.">
        <title>The genome of Desulfotalea psychrophila, a sulfate-reducing bacterium from permanently cold Arctic sediments.</title>
        <authorList>
            <person name="Rabus R."/>
            <person name="Ruepp A."/>
            <person name="Frickey T."/>
            <person name="Rattei T."/>
            <person name="Fartmann B."/>
            <person name="Stark M."/>
            <person name="Bauer M."/>
            <person name="Zibat A."/>
            <person name="Lombardot T."/>
            <person name="Becker I."/>
            <person name="Amann J."/>
            <person name="Gellner K."/>
            <person name="Teeling H."/>
            <person name="Leuschner W.D."/>
            <person name="Gloeckner F.-O."/>
            <person name="Lupas A.N."/>
            <person name="Amann R."/>
            <person name="Klenk H.-P."/>
        </authorList>
    </citation>
    <scope>NUCLEOTIDE SEQUENCE [LARGE SCALE GENOMIC DNA]</scope>
    <source>
        <strain>DSM 12343 / LSv54</strain>
    </source>
</reference>
<protein>
    <recommendedName>
        <fullName evidence="1">Protein-L-isoaspartate O-methyltransferase</fullName>
        <ecNumber evidence="1">2.1.1.77</ecNumber>
    </recommendedName>
    <alternativeName>
        <fullName evidence="1">L-isoaspartyl protein carboxyl methyltransferase</fullName>
    </alternativeName>
    <alternativeName>
        <fullName evidence="1">Protein L-isoaspartyl methyltransferase</fullName>
    </alternativeName>
    <alternativeName>
        <fullName evidence="1">Protein-beta-aspartate methyltransferase</fullName>
        <shortName evidence="1">PIMT</shortName>
    </alternativeName>
</protein>
<sequence>MIDNYSTAREKMLREQIVARGVTDMATLDAILEVPRHFFVDEGQRMRAYGDYPLSITEGQTISQPYIVAYMTSLLQLTASDTVLEIGTGSGYQAAILSKICRQVYTVECIHSLLNKARKVFDSLRYFNIRSKYDDGSRGWSEFAPYDAIIVTAGSPEIPTPLLDQLADGGRMVIPVGPRYEQVLKRVTKEGDDFVVEDLAPVRFVDLVGVHGWK</sequence>
<organism>
    <name type="scientific">Desulfotalea psychrophila (strain LSv54 / DSM 12343)</name>
    <dbReference type="NCBI Taxonomy" id="177439"/>
    <lineage>
        <taxon>Bacteria</taxon>
        <taxon>Pseudomonadati</taxon>
        <taxon>Thermodesulfobacteriota</taxon>
        <taxon>Desulfobulbia</taxon>
        <taxon>Desulfobulbales</taxon>
        <taxon>Desulfocapsaceae</taxon>
        <taxon>Desulfotalea</taxon>
    </lineage>
</organism>
<feature type="chain" id="PRO_0000351852" description="Protein-L-isoaspartate O-methyltransferase">
    <location>
        <begin position="1"/>
        <end position="214"/>
    </location>
</feature>
<feature type="active site" evidence="1">
    <location>
        <position position="63"/>
    </location>
</feature>
<accession>Q6ARM1</accession>
<name>PIMT_DESPS</name>
<dbReference type="EC" id="2.1.1.77" evidence="1"/>
<dbReference type="EMBL" id="CR522870">
    <property type="protein sequence ID" value="CAG35004.1"/>
    <property type="molecule type" value="Genomic_DNA"/>
</dbReference>
<dbReference type="RefSeq" id="WP_011187520.1">
    <property type="nucleotide sequence ID" value="NC_006138.1"/>
</dbReference>
<dbReference type="SMR" id="Q6ARM1"/>
<dbReference type="STRING" id="177439.DP0275"/>
<dbReference type="KEGG" id="dps:DP0275"/>
<dbReference type="eggNOG" id="COG2518">
    <property type="taxonomic scope" value="Bacteria"/>
</dbReference>
<dbReference type="HOGENOM" id="CLU_055432_2_0_7"/>
<dbReference type="OrthoDB" id="9810066at2"/>
<dbReference type="Proteomes" id="UP000000602">
    <property type="component" value="Chromosome"/>
</dbReference>
<dbReference type="GO" id="GO:0005737">
    <property type="term" value="C:cytoplasm"/>
    <property type="evidence" value="ECO:0007669"/>
    <property type="project" value="UniProtKB-SubCell"/>
</dbReference>
<dbReference type="GO" id="GO:0004719">
    <property type="term" value="F:protein-L-isoaspartate (D-aspartate) O-methyltransferase activity"/>
    <property type="evidence" value="ECO:0007669"/>
    <property type="project" value="UniProtKB-UniRule"/>
</dbReference>
<dbReference type="GO" id="GO:0032259">
    <property type="term" value="P:methylation"/>
    <property type="evidence" value="ECO:0007669"/>
    <property type="project" value="UniProtKB-KW"/>
</dbReference>
<dbReference type="GO" id="GO:0036211">
    <property type="term" value="P:protein modification process"/>
    <property type="evidence" value="ECO:0007669"/>
    <property type="project" value="UniProtKB-UniRule"/>
</dbReference>
<dbReference type="GO" id="GO:0030091">
    <property type="term" value="P:protein repair"/>
    <property type="evidence" value="ECO:0007669"/>
    <property type="project" value="UniProtKB-UniRule"/>
</dbReference>
<dbReference type="FunFam" id="3.40.50.150:FF:000010">
    <property type="entry name" value="Protein-L-isoaspartate O-methyltransferase"/>
    <property type="match status" value="1"/>
</dbReference>
<dbReference type="Gene3D" id="3.40.50.150">
    <property type="entry name" value="Vaccinia Virus protein VP39"/>
    <property type="match status" value="1"/>
</dbReference>
<dbReference type="HAMAP" id="MF_00090">
    <property type="entry name" value="PIMT"/>
    <property type="match status" value="1"/>
</dbReference>
<dbReference type="InterPro" id="IPR000682">
    <property type="entry name" value="PCMT"/>
</dbReference>
<dbReference type="InterPro" id="IPR029063">
    <property type="entry name" value="SAM-dependent_MTases_sf"/>
</dbReference>
<dbReference type="NCBIfam" id="TIGR00080">
    <property type="entry name" value="pimt"/>
    <property type="match status" value="1"/>
</dbReference>
<dbReference type="NCBIfam" id="NF001453">
    <property type="entry name" value="PRK00312.1"/>
    <property type="match status" value="1"/>
</dbReference>
<dbReference type="PANTHER" id="PTHR11579">
    <property type="entry name" value="PROTEIN-L-ISOASPARTATE O-METHYLTRANSFERASE"/>
    <property type="match status" value="1"/>
</dbReference>
<dbReference type="PANTHER" id="PTHR11579:SF0">
    <property type="entry name" value="PROTEIN-L-ISOASPARTATE(D-ASPARTATE) O-METHYLTRANSFERASE"/>
    <property type="match status" value="1"/>
</dbReference>
<dbReference type="Pfam" id="PF01135">
    <property type="entry name" value="PCMT"/>
    <property type="match status" value="1"/>
</dbReference>
<dbReference type="SUPFAM" id="SSF53335">
    <property type="entry name" value="S-adenosyl-L-methionine-dependent methyltransferases"/>
    <property type="match status" value="1"/>
</dbReference>
<dbReference type="PROSITE" id="PS01279">
    <property type="entry name" value="PCMT"/>
    <property type="match status" value="1"/>
</dbReference>
<proteinExistence type="inferred from homology"/>
<keyword id="KW-0963">Cytoplasm</keyword>
<keyword id="KW-0489">Methyltransferase</keyword>
<keyword id="KW-1185">Reference proteome</keyword>
<keyword id="KW-0949">S-adenosyl-L-methionine</keyword>
<keyword id="KW-0808">Transferase</keyword>
<comment type="function">
    <text evidence="1">Catalyzes the methyl esterification of L-isoaspartyl residues in peptides and proteins that result from spontaneous decomposition of normal L-aspartyl and L-asparaginyl residues. It plays a role in the repair and/or degradation of damaged proteins.</text>
</comment>
<comment type="catalytic activity">
    <reaction evidence="1">
        <text>[protein]-L-isoaspartate + S-adenosyl-L-methionine = [protein]-L-isoaspartate alpha-methyl ester + S-adenosyl-L-homocysteine</text>
        <dbReference type="Rhea" id="RHEA:12705"/>
        <dbReference type="Rhea" id="RHEA-COMP:12143"/>
        <dbReference type="Rhea" id="RHEA-COMP:12144"/>
        <dbReference type="ChEBI" id="CHEBI:57856"/>
        <dbReference type="ChEBI" id="CHEBI:59789"/>
        <dbReference type="ChEBI" id="CHEBI:90596"/>
        <dbReference type="ChEBI" id="CHEBI:90598"/>
        <dbReference type="EC" id="2.1.1.77"/>
    </reaction>
</comment>
<comment type="subcellular location">
    <subcellularLocation>
        <location evidence="1">Cytoplasm</location>
    </subcellularLocation>
</comment>
<comment type="similarity">
    <text evidence="1">Belongs to the methyltransferase superfamily. L-isoaspartyl/D-aspartyl protein methyltransferase family.</text>
</comment>
<gene>
    <name evidence="1" type="primary">pcm</name>
    <name type="ordered locus">DP0275</name>
</gene>
<evidence type="ECO:0000255" key="1">
    <source>
        <dbReference type="HAMAP-Rule" id="MF_00090"/>
    </source>
</evidence>